<dbReference type="EMBL" id="AC092556">
    <property type="protein sequence ID" value="AAR87255.1"/>
    <property type="molecule type" value="Genomic_DNA"/>
</dbReference>
<dbReference type="EMBL" id="AC135225">
    <property type="protein sequence ID" value="AAP68365.1"/>
    <property type="molecule type" value="Genomic_DNA"/>
</dbReference>
<dbReference type="EMBL" id="AF377947">
    <property type="protein sequence ID" value="AAO32309.1"/>
    <property type="molecule type" value="Genomic_DNA"/>
</dbReference>
<dbReference type="EMBL" id="DP000009">
    <property type="protein sequence ID" value="ABF98918.1"/>
    <property type="molecule type" value="Genomic_DNA"/>
</dbReference>
<dbReference type="EMBL" id="DP000009">
    <property type="protein sequence ID" value="ABF98919.1"/>
    <property type="molecule type" value="Genomic_DNA"/>
</dbReference>
<dbReference type="EMBL" id="AP008209">
    <property type="protein sequence ID" value="BAF13212.1"/>
    <property type="molecule type" value="Genomic_DNA"/>
</dbReference>
<dbReference type="EMBL" id="AP014959">
    <property type="protein sequence ID" value="BAS86423.1"/>
    <property type="molecule type" value="Genomic_DNA"/>
</dbReference>
<dbReference type="EMBL" id="CM000140">
    <property type="protein sequence ID" value="EAZ28607.1"/>
    <property type="molecule type" value="Genomic_DNA"/>
</dbReference>
<dbReference type="EMBL" id="AK069303">
    <property type="protein sequence ID" value="BAG91366.1"/>
    <property type="molecule type" value="mRNA"/>
</dbReference>
<dbReference type="RefSeq" id="XP_015630528.1">
    <property type="nucleotide sequence ID" value="XM_015775042.1"/>
</dbReference>
<dbReference type="RefSeq" id="XP_015630529.1">
    <property type="nucleotide sequence ID" value="XM_015775043.1"/>
</dbReference>
<dbReference type="RefSeq" id="XP_015630530.1">
    <property type="nucleotide sequence ID" value="XM_015775044.1"/>
</dbReference>
<dbReference type="RefSeq" id="XP_015630531.1">
    <property type="nucleotide sequence ID" value="XM_015775045.1"/>
</dbReference>
<dbReference type="SMR" id="Q850M0"/>
<dbReference type="FunCoup" id="Q850M0">
    <property type="interactions" value="2005"/>
</dbReference>
<dbReference type="STRING" id="39947.Q850M0"/>
<dbReference type="PaxDb" id="39947-Q850M0"/>
<dbReference type="EnsemblPlants" id="Os03t0752300-01">
    <property type="protein sequence ID" value="Os03t0752300-01"/>
    <property type="gene ID" value="Os03g0752300"/>
</dbReference>
<dbReference type="GeneID" id="4334137"/>
<dbReference type="Gramene" id="Os03t0752300-01">
    <property type="protein sequence ID" value="Os03t0752300-01"/>
    <property type="gene ID" value="Os03g0752300"/>
</dbReference>
<dbReference type="KEGG" id="dosa:Os03g0752300"/>
<dbReference type="KEGG" id="osa:4334137"/>
<dbReference type="eggNOG" id="KOG1418">
    <property type="taxonomic scope" value="Eukaryota"/>
</dbReference>
<dbReference type="HOGENOM" id="CLU_033675_0_1_1"/>
<dbReference type="InParanoid" id="Q850M0"/>
<dbReference type="OMA" id="TICLAQC"/>
<dbReference type="OrthoDB" id="415460at2759"/>
<dbReference type="Proteomes" id="UP000000763">
    <property type="component" value="Chromosome 3"/>
</dbReference>
<dbReference type="Proteomes" id="UP000007752">
    <property type="component" value="Chromosome 3"/>
</dbReference>
<dbReference type="Proteomes" id="UP000059680">
    <property type="component" value="Chromosome 3"/>
</dbReference>
<dbReference type="GO" id="GO:0009705">
    <property type="term" value="C:plant-type vacuole membrane"/>
    <property type="evidence" value="ECO:0000314"/>
    <property type="project" value="UniProtKB"/>
</dbReference>
<dbReference type="GO" id="GO:0005886">
    <property type="term" value="C:plasma membrane"/>
    <property type="evidence" value="ECO:0000318"/>
    <property type="project" value="GO_Central"/>
</dbReference>
<dbReference type="GO" id="GO:0031004">
    <property type="term" value="C:potassium ion-transporting ATPase complex"/>
    <property type="evidence" value="ECO:0000314"/>
    <property type="project" value="UniProtKB"/>
</dbReference>
<dbReference type="GO" id="GO:0005509">
    <property type="term" value="F:calcium ion binding"/>
    <property type="evidence" value="ECO:0007669"/>
    <property type="project" value="InterPro"/>
</dbReference>
<dbReference type="GO" id="GO:0005242">
    <property type="term" value="F:inward rectifier potassium channel activity"/>
    <property type="evidence" value="ECO:0000314"/>
    <property type="project" value="UniProtKB"/>
</dbReference>
<dbReference type="GO" id="GO:0015271">
    <property type="term" value="F:outward rectifier potassium channel activity"/>
    <property type="evidence" value="ECO:0000318"/>
    <property type="project" value="GO_Central"/>
</dbReference>
<dbReference type="GO" id="GO:0022841">
    <property type="term" value="F:potassium ion leak channel activity"/>
    <property type="evidence" value="ECO:0000318"/>
    <property type="project" value="GO_Central"/>
</dbReference>
<dbReference type="GO" id="GO:0030007">
    <property type="term" value="P:intracellular potassium ion homeostasis"/>
    <property type="evidence" value="ECO:0000305"/>
    <property type="project" value="UniProtKB"/>
</dbReference>
<dbReference type="GO" id="GO:0071805">
    <property type="term" value="P:potassium ion transmembrane transport"/>
    <property type="evidence" value="ECO:0000318"/>
    <property type="project" value="GO_Central"/>
</dbReference>
<dbReference type="FunFam" id="1.10.287.70:FF:000127">
    <property type="entry name" value="Calcium-activated outward-rectifying potassium channel 1"/>
    <property type="match status" value="1"/>
</dbReference>
<dbReference type="FunFam" id="1.10.287.70:FF:000128">
    <property type="entry name" value="Two-pore potassium channel 1"/>
    <property type="match status" value="1"/>
</dbReference>
<dbReference type="Gene3D" id="1.10.287.70">
    <property type="match status" value="2"/>
</dbReference>
<dbReference type="InterPro" id="IPR003280">
    <property type="entry name" value="2pore_dom_K_chnl"/>
</dbReference>
<dbReference type="InterPro" id="IPR011992">
    <property type="entry name" value="EF-hand-dom_pair"/>
</dbReference>
<dbReference type="InterPro" id="IPR018247">
    <property type="entry name" value="EF_Hand_1_Ca_BS"/>
</dbReference>
<dbReference type="InterPro" id="IPR002048">
    <property type="entry name" value="EF_hand_dom"/>
</dbReference>
<dbReference type="InterPro" id="IPR013099">
    <property type="entry name" value="K_chnl_dom"/>
</dbReference>
<dbReference type="PANTHER" id="PTHR11003:SF334">
    <property type="entry name" value="FI03418P"/>
    <property type="match status" value="1"/>
</dbReference>
<dbReference type="PANTHER" id="PTHR11003">
    <property type="entry name" value="POTASSIUM CHANNEL, SUBFAMILY K"/>
    <property type="match status" value="1"/>
</dbReference>
<dbReference type="Pfam" id="PF07885">
    <property type="entry name" value="Ion_trans_2"/>
    <property type="match status" value="2"/>
</dbReference>
<dbReference type="PRINTS" id="PR01333">
    <property type="entry name" value="2POREKCHANEL"/>
</dbReference>
<dbReference type="SUPFAM" id="SSF47473">
    <property type="entry name" value="EF-hand"/>
    <property type="match status" value="1"/>
</dbReference>
<dbReference type="SUPFAM" id="SSF81324">
    <property type="entry name" value="Voltage-gated potassium channels"/>
    <property type="match status" value="2"/>
</dbReference>
<dbReference type="PROSITE" id="PS00018">
    <property type="entry name" value="EF_HAND_1"/>
    <property type="match status" value="2"/>
</dbReference>
<dbReference type="PROSITE" id="PS50222">
    <property type="entry name" value="EF_HAND_2"/>
    <property type="match status" value="1"/>
</dbReference>
<accession>Q850M0</accession>
<accession>A0A0P0W378</accession>
<gene>
    <name type="primary">TPKA</name>
    <name type="synonym">KCO1</name>
    <name type="ordered locus">Os03g0752300</name>
    <name type="ordered locus">LOC_Os03g54100</name>
    <name type="ORF">OJ1112_G08.7</name>
    <name type="ORF">OsJ_12594</name>
    <name type="ORF">OSJNBa0032E21.10</name>
    <name type="ORF">OSJNBa0047E24.7</name>
</gene>
<organism>
    <name type="scientific">Oryza sativa subsp. japonica</name>
    <name type="common">Rice</name>
    <dbReference type="NCBI Taxonomy" id="39947"/>
    <lineage>
        <taxon>Eukaryota</taxon>
        <taxon>Viridiplantae</taxon>
        <taxon>Streptophyta</taxon>
        <taxon>Embryophyta</taxon>
        <taxon>Tracheophyta</taxon>
        <taxon>Spermatophyta</taxon>
        <taxon>Magnoliopsida</taxon>
        <taxon>Liliopsida</taxon>
        <taxon>Poales</taxon>
        <taxon>Poaceae</taxon>
        <taxon>BOP clade</taxon>
        <taxon>Oryzoideae</taxon>
        <taxon>Oryzeae</taxon>
        <taxon>Oryzinae</taxon>
        <taxon>Oryza</taxon>
        <taxon>Oryza sativa</taxon>
    </lineage>
</organism>
<proteinExistence type="evidence at protein level"/>
<evidence type="ECO:0000255" key="1"/>
<evidence type="ECO:0000255" key="2">
    <source>
        <dbReference type="PROSITE-ProRule" id="PRU00448"/>
    </source>
</evidence>
<evidence type="ECO:0000256" key="3">
    <source>
        <dbReference type="SAM" id="MobiDB-lite"/>
    </source>
</evidence>
<evidence type="ECO:0000269" key="4">
    <source>
    </source>
</evidence>
<evidence type="ECO:0000305" key="5"/>
<comment type="function">
    <text evidence="4">Highly selective inward-rectifying potassium channel that is specifically located in the tonoplast of large vacuoles. Functions independently of the voltage difference across the membrane.</text>
</comment>
<comment type="subunit">
    <text evidence="5">Homodimer.</text>
</comment>
<comment type="subcellular location">
    <subcellularLocation>
        <location evidence="4">Vacuole membrane</location>
        <topology evidence="4">Multi-pass membrane protein</topology>
    </subcellularLocation>
    <text>Tonoplast of large vacuoles.</text>
</comment>
<comment type="domain">
    <text>Each of the two pore-forming region (also called P-domain or P-loop) is enclosed by two transmembrane segments (2P/4TM) and contains the GYGD signature motif which seems to be involved in potassium selectivity.</text>
</comment>
<comment type="similarity">
    <text evidence="5">Belongs to the two pore domain potassium channel (TC 1.A.1.7) family.</text>
</comment>
<protein>
    <recommendedName>
        <fullName>Two pore potassium channel a</fullName>
        <shortName>Two K(+) channel a</shortName>
    </recommendedName>
    <alternativeName>
        <fullName>Calcium-activated outward-rectifying potassium channel 1</fullName>
        <shortName>OsKCO1</shortName>
    </alternativeName>
</protein>
<keyword id="KW-0106">Calcium</keyword>
<keyword id="KW-0407">Ion channel</keyword>
<keyword id="KW-0406">Ion transport</keyword>
<keyword id="KW-0472">Membrane</keyword>
<keyword id="KW-0479">Metal-binding</keyword>
<keyword id="KW-0630">Potassium</keyword>
<keyword id="KW-0631">Potassium channel</keyword>
<keyword id="KW-0633">Potassium transport</keyword>
<keyword id="KW-1185">Reference proteome</keyword>
<keyword id="KW-0677">Repeat</keyword>
<keyword id="KW-0812">Transmembrane</keyword>
<keyword id="KW-1133">Transmembrane helix</keyword>
<keyword id="KW-0813">Transport</keyword>
<keyword id="KW-0926">Vacuole</keyword>
<sequence length="347" mass="39236">MDDNSIQQSLLADNPNVLQRKPSEGVNRFRRCRSTPSTDPLQGPPEKGSSVKAKELFKEMRPSFRLVGLLLFIYLLVGVLAFYAVMDEISGKRTNRVLDALYFCVVTMTTVGYGDLVPNNDTTKLLACAFVFMGMAVVALFVSKVADYLVEKQEVLFFKALHTNLKGGETKMLRAIETNRIKYKFYTNALLLVLSIISGTVFLWKVEKLSLVDSFYCVCATITTLGYGDKSFSSKLGRVFAVFWIITSTIIMAQFFMYLAEIYTERRQKMLANWVLTRKMTKMDLEAADLDDDRQVGAAEFVVYKLKELGKINQEEISSFLEEFEKLDVDHSGTLSPYDLTLAQSAQ</sequence>
<name>KCO1_ORYSJ</name>
<feature type="chain" id="PRO_0000410872" description="Two pore potassium channel a">
    <location>
        <begin position="1"/>
        <end position="347"/>
    </location>
</feature>
<feature type="topological domain" description="Cytoplasmic" evidence="1">
    <location>
        <begin position="1"/>
        <end position="65"/>
    </location>
</feature>
<feature type="transmembrane region" description="Helical" evidence="1">
    <location>
        <begin position="66"/>
        <end position="86"/>
    </location>
</feature>
<feature type="intramembrane region" description="Pore-forming; Name=Pore-forming 1" evidence="1">
    <location>
        <begin position="99"/>
        <end position="118"/>
    </location>
</feature>
<feature type="transmembrane region" description="Helical" evidence="1">
    <location>
        <begin position="125"/>
        <end position="145"/>
    </location>
</feature>
<feature type="topological domain" description="Cytoplasmic" evidence="1">
    <location>
        <begin position="146"/>
        <end position="183"/>
    </location>
</feature>
<feature type="transmembrane region" description="Helical" evidence="1">
    <location>
        <begin position="184"/>
        <end position="204"/>
    </location>
</feature>
<feature type="intramembrane region" description="Pore-forming; Name=Pore-forming 2" evidence="1">
    <location>
        <begin position="213"/>
        <end position="232"/>
    </location>
</feature>
<feature type="transmembrane region" description="Helical" evidence="1">
    <location>
        <begin position="239"/>
        <end position="259"/>
    </location>
</feature>
<feature type="topological domain" description="Cytoplasmic" evidence="1">
    <location>
        <begin position="260"/>
        <end position="347"/>
    </location>
</feature>
<feature type="domain" description="EF-hand 1" evidence="5">
    <location>
        <begin position="276"/>
        <end position="311"/>
    </location>
</feature>
<feature type="domain" description="EF-hand 2" evidence="2">
    <location>
        <begin position="315"/>
        <end position="347"/>
    </location>
</feature>
<feature type="region of interest" description="Disordered" evidence="3">
    <location>
        <begin position="1"/>
        <end position="49"/>
    </location>
</feature>
<feature type="compositionally biased region" description="Polar residues" evidence="3">
    <location>
        <begin position="1"/>
        <end position="11"/>
    </location>
</feature>
<feature type="binding site" evidence="5">
    <location>
        <position position="289"/>
    </location>
    <ligand>
        <name>Ca(2+)</name>
        <dbReference type="ChEBI" id="CHEBI:29108"/>
        <label>1</label>
    </ligand>
</feature>
<feature type="binding site" evidence="5">
    <location>
        <position position="291"/>
    </location>
    <ligand>
        <name>Ca(2+)</name>
        <dbReference type="ChEBI" id="CHEBI:29108"/>
        <label>1</label>
    </ligand>
</feature>
<feature type="binding site" evidence="5">
    <location>
        <position position="293"/>
    </location>
    <ligand>
        <name>Ca(2+)</name>
        <dbReference type="ChEBI" id="CHEBI:29108"/>
        <label>1</label>
    </ligand>
</feature>
<feature type="binding site" evidence="5">
    <location>
        <position position="295"/>
    </location>
    <ligand>
        <name>Ca(2+)</name>
        <dbReference type="ChEBI" id="CHEBI:29108"/>
        <label>1</label>
    </ligand>
</feature>
<feature type="binding site" evidence="5">
    <location>
        <position position="300"/>
    </location>
    <ligand>
        <name>Ca(2+)</name>
        <dbReference type="ChEBI" id="CHEBI:29108"/>
        <label>1</label>
    </ligand>
</feature>
<feature type="binding site" evidence="2">
    <location>
        <position position="328"/>
    </location>
    <ligand>
        <name>Ca(2+)</name>
        <dbReference type="ChEBI" id="CHEBI:29108"/>
        <label>2</label>
    </ligand>
</feature>
<feature type="binding site" evidence="2">
    <location>
        <position position="330"/>
    </location>
    <ligand>
        <name>Ca(2+)</name>
        <dbReference type="ChEBI" id="CHEBI:29108"/>
        <label>2</label>
    </ligand>
</feature>
<feature type="binding site" evidence="2">
    <location>
        <position position="332"/>
    </location>
    <ligand>
        <name>Ca(2+)</name>
        <dbReference type="ChEBI" id="CHEBI:29108"/>
        <label>2</label>
    </ligand>
</feature>
<feature type="binding site" evidence="2">
    <location>
        <position position="334"/>
    </location>
    <ligand>
        <name>Ca(2+)</name>
        <dbReference type="ChEBI" id="CHEBI:29108"/>
        <label>2</label>
    </ligand>
</feature>
<feature type="binding site" evidence="2">
    <location>
        <position position="339"/>
    </location>
    <ligand>
        <name>Ca(2+)</name>
        <dbReference type="ChEBI" id="CHEBI:29108"/>
        <label>2</label>
    </ligand>
</feature>
<feature type="mutagenesis site" description="No effect on targeting to large vacuole." evidence="4">
    <original>D</original>
    <variation>G</variation>
    <location>
        <position position="292"/>
    </location>
</feature>
<feature type="mutagenesis site" description="Mainly targeted to large vacuole and partly to protein storage vacuole. Almost completely targeted to protein storage vacuole; when associated with S-313." evidence="4">
    <original>V</original>
    <variation>L</variation>
    <location>
        <position position="303"/>
    </location>
</feature>
<feature type="mutagenesis site" description="Equally targeted to large vacuole and protein storage vacuole. Almost completely targeted to protein storage vacuole; when associated with L-303." evidence="4">
    <original>N</original>
    <variation>S</variation>
    <location>
        <position position="313"/>
    </location>
</feature>
<feature type="mutagenesis site" description="Mainly targeted to protein storage vacuole." evidence="4">
    <original>K</original>
    <variation>N</variation>
    <location>
        <position position="326"/>
    </location>
</feature>
<feature type="mutagenesis site" description="Mainly targeted to large vacuole and partly to the ER; when associated with A-333." evidence="4">
    <original>D</original>
    <variation>H</variation>
    <location>
        <position position="330"/>
    </location>
</feature>
<feature type="mutagenesis site" description="Mainly targeted to large vacuole and partly to the ER; when associated with H-330." evidence="4">
    <original>G</original>
    <variation>A</variation>
    <location>
        <position position="333"/>
    </location>
</feature>
<feature type="mutagenesis site" description="No effect on targeting to large vacuole." evidence="4">
    <original>Y</original>
    <variation>A</variation>
    <location>
        <position position="338"/>
    </location>
</feature>
<reference key="1">
    <citation type="journal article" date="2005" name="Genome Res.">
        <title>Sequence, annotation, and analysis of synteny between rice chromosome 3 and diverged grass species.</title>
        <authorList>
            <consortium name="The rice chromosome 3 sequencing consortium"/>
            <person name="Buell C.R."/>
            <person name="Yuan Q."/>
            <person name="Ouyang S."/>
            <person name="Liu J."/>
            <person name="Zhu W."/>
            <person name="Wang A."/>
            <person name="Maiti R."/>
            <person name="Haas B."/>
            <person name="Wortman J."/>
            <person name="Pertea M."/>
            <person name="Jones K.M."/>
            <person name="Kim M."/>
            <person name="Overton L."/>
            <person name="Tsitrin T."/>
            <person name="Fadrosh D."/>
            <person name="Bera J."/>
            <person name="Weaver B."/>
            <person name="Jin S."/>
            <person name="Johri S."/>
            <person name="Reardon M."/>
            <person name="Webb K."/>
            <person name="Hill J."/>
            <person name="Moffat K."/>
            <person name="Tallon L."/>
            <person name="Van Aken S."/>
            <person name="Lewis M."/>
            <person name="Utterback T."/>
            <person name="Feldblyum T."/>
            <person name="Zismann V."/>
            <person name="Iobst S."/>
            <person name="Hsiao J."/>
            <person name="de Vazeille A.R."/>
            <person name="Salzberg S.L."/>
            <person name="White O."/>
            <person name="Fraser C.M."/>
            <person name="Yu Y."/>
            <person name="Kim H."/>
            <person name="Rambo T."/>
            <person name="Currie J."/>
            <person name="Collura K."/>
            <person name="Kernodle-Thompson S."/>
            <person name="Wei F."/>
            <person name="Kudrna K."/>
            <person name="Ammiraju J.S.S."/>
            <person name="Luo M."/>
            <person name="Goicoechea J.L."/>
            <person name="Wing R.A."/>
            <person name="Henry D."/>
            <person name="Oates R."/>
            <person name="Palmer M."/>
            <person name="Pries G."/>
            <person name="Saski C."/>
            <person name="Simmons J."/>
            <person name="Soderlund C."/>
            <person name="Nelson W."/>
            <person name="de la Bastide M."/>
            <person name="Spiegel L."/>
            <person name="Nascimento L."/>
            <person name="Huang E."/>
            <person name="Preston R."/>
            <person name="Zutavern T."/>
            <person name="Palmer L."/>
            <person name="O'Shaughnessy A."/>
            <person name="Dike S."/>
            <person name="McCombie W.R."/>
            <person name="Minx P."/>
            <person name="Cordum H."/>
            <person name="Wilson R."/>
            <person name="Jin W."/>
            <person name="Lee H.R."/>
            <person name="Jiang J."/>
            <person name="Jackson S."/>
        </authorList>
    </citation>
    <scope>NUCLEOTIDE SEQUENCE [LARGE SCALE GENOMIC DNA]</scope>
    <source>
        <strain>cv. Nipponbare</strain>
    </source>
</reference>
<reference key="2">
    <citation type="journal article" date="2005" name="Nature">
        <title>The map-based sequence of the rice genome.</title>
        <authorList>
            <consortium name="International rice genome sequencing project (IRGSP)"/>
        </authorList>
    </citation>
    <scope>NUCLEOTIDE SEQUENCE [LARGE SCALE GENOMIC DNA]</scope>
    <source>
        <strain>cv. Nipponbare</strain>
    </source>
</reference>
<reference key="3">
    <citation type="journal article" date="2008" name="Nucleic Acids Res.">
        <title>The rice annotation project database (RAP-DB): 2008 update.</title>
        <authorList>
            <consortium name="The rice annotation project (RAP)"/>
        </authorList>
    </citation>
    <scope>GENOME REANNOTATION</scope>
    <source>
        <strain>cv. Nipponbare</strain>
    </source>
</reference>
<reference key="4">
    <citation type="journal article" date="2013" name="Rice">
        <title>Improvement of the Oryza sativa Nipponbare reference genome using next generation sequence and optical map data.</title>
        <authorList>
            <person name="Kawahara Y."/>
            <person name="de la Bastide M."/>
            <person name="Hamilton J.P."/>
            <person name="Kanamori H."/>
            <person name="McCombie W.R."/>
            <person name="Ouyang S."/>
            <person name="Schwartz D.C."/>
            <person name="Tanaka T."/>
            <person name="Wu J."/>
            <person name="Zhou S."/>
            <person name="Childs K.L."/>
            <person name="Davidson R.M."/>
            <person name="Lin H."/>
            <person name="Quesada-Ocampo L."/>
            <person name="Vaillancourt B."/>
            <person name="Sakai H."/>
            <person name="Lee S.S."/>
            <person name="Kim J."/>
            <person name="Numa H."/>
            <person name="Itoh T."/>
            <person name="Buell C.R."/>
            <person name="Matsumoto T."/>
        </authorList>
    </citation>
    <scope>GENOME REANNOTATION</scope>
    <source>
        <strain>cv. Nipponbare</strain>
    </source>
</reference>
<reference key="5">
    <citation type="journal article" date="2005" name="PLoS Biol.">
        <title>The genomes of Oryza sativa: a history of duplications.</title>
        <authorList>
            <person name="Yu J."/>
            <person name="Wang J."/>
            <person name="Lin W."/>
            <person name="Li S."/>
            <person name="Li H."/>
            <person name="Zhou J."/>
            <person name="Ni P."/>
            <person name="Dong W."/>
            <person name="Hu S."/>
            <person name="Zeng C."/>
            <person name="Zhang J."/>
            <person name="Zhang Y."/>
            <person name="Li R."/>
            <person name="Xu Z."/>
            <person name="Li S."/>
            <person name="Li X."/>
            <person name="Zheng H."/>
            <person name="Cong L."/>
            <person name="Lin L."/>
            <person name="Yin J."/>
            <person name="Geng J."/>
            <person name="Li G."/>
            <person name="Shi J."/>
            <person name="Liu J."/>
            <person name="Lv H."/>
            <person name="Li J."/>
            <person name="Wang J."/>
            <person name="Deng Y."/>
            <person name="Ran L."/>
            <person name="Shi X."/>
            <person name="Wang X."/>
            <person name="Wu Q."/>
            <person name="Li C."/>
            <person name="Ren X."/>
            <person name="Wang J."/>
            <person name="Wang X."/>
            <person name="Li D."/>
            <person name="Liu D."/>
            <person name="Zhang X."/>
            <person name="Ji Z."/>
            <person name="Zhao W."/>
            <person name="Sun Y."/>
            <person name="Zhang Z."/>
            <person name="Bao J."/>
            <person name="Han Y."/>
            <person name="Dong L."/>
            <person name="Ji J."/>
            <person name="Chen P."/>
            <person name="Wu S."/>
            <person name="Liu J."/>
            <person name="Xiao Y."/>
            <person name="Bu D."/>
            <person name="Tan J."/>
            <person name="Yang L."/>
            <person name="Ye C."/>
            <person name="Zhang J."/>
            <person name="Xu J."/>
            <person name="Zhou Y."/>
            <person name="Yu Y."/>
            <person name="Zhang B."/>
            <person name="Zhuang S."/>
            <person name="Wei H."/>
            <person name="Liu B."/>
            <person name="Lei M."/>
            <person name="Yu H."/>
            <person name="Li Y."/>
            <person name="Xu H."/>
            <person name="Wei S."/>
            <person name="He X."/>
            <person name="Fang L."/>
            <person name="Zhang Z."/>
            <person name="Zhang Y."/>
            <person name="Huang X."/>
            <person name="Su Z."/>
            <person name="Tong W."/>
            <person name="Li J."/>
            <person name="Tong Z."/>
            <person name="Li S."/>
            <person name="Ye J."/>
            <person name="Wang L."/>
            <person name="Fang L."/>
            <person name="Lei T."/>
            <person name="Chen C.-S."/>
            <person name="Chen H.-C."/>
            <person name="Xu Z."/>
            <person name="Li H."/>
            <person name="Huang H."/>
            <person name="Zhang F."/>
            <person name="Xu H."/>
            <person name="Li N."/>
            <person name="Zhao C."/>
            <person name="Li S."/>
            <person name="Dong L."/>
            <person name="Huang Y."/>
            <person name="Li L."/>
            <person name="Xi Y."/>
            <person name="Qi Q."/>
            <person name="Li W."/>
            <person name="Zhang B."/>
            <person name="Hu W."/>
            <person name="Zhang Y."/>
            <person name="Tian X."/>
            <person name="Jiao Y."/>
            <person name="Liang X."/>
            <person name="Jin J."/>
            <person name="Gao L."/>
            <person name="Zheng W."/>
            <person name="Hao B."/>
            <person name="Liu S.-M."/>
            <person name="Wang W."/>
            <person name="Yuan L."/>
            <person name="Cao M."/>
            <person name="McDermott J."/>
            <person name="Samudrala R."/>
            <person name="Wang J."/>
            <person name="Wong G.K.-S."/>
            <person name="Yang H."/>
        </authorList>
    </citation>
    <scope>NUCLEOTIDE SEQUENCE [LARGE SCALE GENOMIC DNA]</scope>
    <source>
        <strain>cv. Nipponbare</strain>
    </source>
</reference>
<reference key="6">
    <citation type="journal article" date="2003" name="Science">
        <title>Collection, mapping, and annotation of over 28,000 cDNA clones from japonica rice.</title>
        <authorList>
            <consortium name="The rice full-length cDNA consortium"/>
        </authorList>
    </citation>
    <scope>NUCLEOTIDE SEQUENCE [LARGE SCALE MRNA]</scope>
    <source>
        <strain>cv. Nipponbare</strain>
    </source>
</reference>
<reference key="7">
    <citation type="journal article" date="2011" name="Plant Cell">
        <title>Rice two-pore K+ channels are expressed in different types of vacuoles.</title>
        <authorList>
            <person name="Isayenkov S."/>
            <person name="Isner J.C."/>
            <person name="Maathuis F.J."/>
        </authorList>
    </citation>
    <scope>FUNCTION</scope>
    <scope>SUBCELLULAR LOCATION</scope>
    <scope>MUTAGENESIS OF ASP-292; VAL-303; ASN-313; LYS-326; ASP-330; GLY-333 AND TYR-338</scope>
</reference>